<comment type="function">
    <text evidence="1">Cell division protein that is part of the divisome complex and is recruited early to the Z-ring. Probably stimulates Z-ring formation, perhaps through the cross-linking of FtsZ protofilaments. Its function overlaps with FtsA.</text>
</comment>
<comment type="subunit">
    <text evidence="1">Homodimer. Interacts with FtsZ.</text>
</comment>
<comment type="subcellular location">
    <subcellularLocation>
        <location evidence="1">Cytoplasm</location>
    </subcellularLocation>
    <text evidence="1">Localizes to the division site, in a FtsZ-dependent manner.</text>
</comment>
<comment type="similarity">
    <text evidence="1">Belongs to the SepF family.</text>
</comment>
<gene>
    <name evidence="1" type="primary">sepF</name>
    <name type="ordered locus">NT01CX_1946</name>
</gene>
<evidence type="ECO:0000255" key="1">
    <source>
        <dbReference type="HAMAP-Rule" id="MF_01197"/>
    </source>
</evidence>
<feature type="chain" id="PRO_0000333998" description="Cell division protein SepF">
    <location>
        <begin position="1"/>
        <end position="153"/>
    </location>
</feature>
<sequence>MAKKMLNKVMDFLGLEEEIDEIEEMDNEAIVEGNEEIDNIFDSSNVRNQKGKVVSIHTTTSTKVLILKPMDYDAAIEICDNLKSRKIIVVNMTSLESKIAQRLLDFIAGASYALGGSLDEIDKGVYIVSPSNVEITNELKNELSTKGILNWTK</sequence>
<proteinExistence type="inferred from homology"/>
<name>SEPF_CLONN</name>
<protein>
    <recommendedName>
        <fullName evidence="1">Cell division protein SepF</fullName>
    </recommendedName>
</protein>
<reference key="1">
    <citation type="journal article" date="2006" name="Nat. Biotechnol.">
        <title>The genome and transcriptomes of the anti-tumor agent Clostridium novyi-NT.</title>
        <authorList>
            <person name="Bettegowda C."/>
            <person name="Huang X."/>
            <person name="Lin J."/>
            <person name="Cheong I."/>
            <person name="Kohli M."/>
            <person name="Szabo S.A."/>
            <person name="Zhang X."/>
            <person name="Diaz L.A. Jr."/>
            <person name="Velculescu V.E."/>
            <person name="Parmigiani G."/>
            <person name="Kinzler K.W."/>
            <person name="Vogelstein B."/>
            <person name="Zhou S."/>
        </authorList>
    </citation>
    <scope>NUCLEOTIDE SEQUENCE [LARGE SCALE GENOMIC DNA]</scope>
    <source>
        <strain>NT</strain>
    </source>
</reference>
<keyword id="KW-0131">Cell cycle</keyword>
<keyword id="KW-0132">Cell division</keyword>
<keyword id="KW-0963">Cytoplasm</keyword>
<keyword id="KW-1185">Reference proteome</keyword>
<keyword id="KW-0717">Septation</keyword>
<dbReference type="EMBL" id="CP000382">
    <property type="protein sequence ID" value="ABK61980.1"/>
    <property type="molecule type" value="Genomic_DNA"/>
</dbReference>
<dbReference type="RefSeq" id="WP_011722023.1">
    <property type="nucleotide sequence ID" value="NC_008593.1"/>
</dbReference>
<dbReference type="SMR" id="A0Q067"/>
<dbReference type="STRING" id="386415.NT01CX_1946"/>
<dbReference type="KEGG" id="cno:NT01CX_1946"/>
<dbReference type="eggNOG" id="COG1799">
    <property type="taxonomic scope" value="Bacteria"/>
</dbReference>
<dbReference type="HOGENOM" id="CLU_078499_4_0_9"/>
<dbReference type="Proteomes" id="UP000008220">
    <property type="component" value="Chromosome"/>
</dbReference>
<dbReference type="GO" id="GO:0005737">
    <property type="term" value="C:cytoplasm"/>
    <property type="evidence" value="ECO:0007669"/>
    <property type="project" value="UniProtKB-SubCell"/>
</dbReference>
<dbReference type="GO" id="GO:0000917">
    <property type="term" value="P:division septum assembly"/>
    <property type="evidence" value="ECO:0007669"/>
    <property type="project" value="UniProtKB-KW"/>
</dbReference>
<dbReference type="GO" id="GO:0043093">
    <property type="term" value="P:FtsZ-dependent cytokinesis"/>
    <property type="evidence" value="ECO:0007669"/>
    <property type="project" value="UniProtKB-UniRule"/>
</dbReference>
<dbReference type="Gene3D" id="3.30.110.150">
    <property type="entry name" value="SepF-like protein"/>
    <property type="match status" value="1"/>
</dbReference>
<dbReference type="HAMAP" id="MF_01197">
    <property type="entry name" value="SepF"/>
    <property type="match status" value="1"/>
</dbReference>
<dbReference type="InterPro" id="IPR023052">
    <property type="entry name" value="Cell_div_SepF"/>
</dbReference>
<dbReference type="InterPro" id="IPR007561">
    <property type="entry name" value="Cell_div_SepF/SepF-rel"/>
</dbReference>
<dbReference type="InterPro" id="IPR038594">
    <property type="entry name" value="SepF-like_sf"/>
</dbReference>
<dbReference type="PANTHER" id="PTHR35798">
    <property type="entry name" value="CELL DIVISION PROTEIN SEPF"/>
    <property type="match status" value="1"/>
</dbReference>
<dbReference type="PANTHER" id="PTHR35798:SF1">
    <property type="entry name" value="CELL DIVISION PROTEIN SEPF"/>
    <property type="match status" value="1"/>
</dbReference>
<dbReference type="Pfam" id="PF04472">
    <property type="entry name" value="SepF"/>
    <property type="match status" value="1"/>
</dbReference>
<accession>A0Q067</accession>
<organism>
    <name type="scientific">Clostridium novyi (strain NT)</name>
    <dbReference type="NCBI Taxonomy" id="386415"/>
    <lineage>
        <taxon>Bacteria</taxon>
        <taxon>Bacillati</taxon>
        <taxon>Bacillota</taxon>
        <taxon>Clostridia</taxon>
        <taxon>Eubacteriales</taxon>
        <taxon>Clostridiaceae</taxon>
        <taxon>Clostridium</taxon>
    </lineage>
</organism>